<proteinExistence type="inferred from homology"/>
<sequence>MSKPIQMEKGVKYRDADKMALIPVKNMPAEQKEVLRKPAWMKIKLPSDSHRIQEIKSAMRKNNLHSVCEEASCPNLAECFNHGTATFMILGAICTRRCPFCDVAHGRPNAPEAEEPKKLAKTIKDMKLKYVVITSVDRDDLRDGGAQHFADCNREIREQNPNIRIETLVPDFRGRMDVALELMKDNPPDVFNHNLETAPRLYRKARPGANYKWSLDLLRKFKEQHPNIPTKSGVMMGLGETKEEIVQVLKDLREHGVTMLTLGQYLAPSRHHLPVERYVPPSEFDELKEIALELGFTHAACGPFVRSSYHADLQAQGMEIK</sequence>
<accession>B7VKE6</accession>
<feature type="chain" id="PRO_1000124649" description="Lipoyl synthase">
    <location>
        <begin position="1"/>
        <end position="321"/>
    </location>
</feature>
<feature type="domain" description="Radical SAM core" evidence="2">
    <location>
        <begin position="80"/>
        <end position="297"/>
    </location>
</feature>
<feature type="binding site" evidence="1">
    <location>
        <position position="68"/>
    </location>
    <ligand>
        <name>[4Fe-4S] cluster</name>
        <dbReference type="ChEBI" id="CHEBI:49883"/>
        <label>1</label>
    </ligand>
</feature>
<feature type="binding site" evidence="1">
    <location>
        <position position="73"/>
    </location>
    <ligand>
        <name>[4Fe-4S] cluster</name>
        <dbReference type="ChEBI" id="CHEBI:49883"/>
        <label>1</label>
    </ligand>
</feature>
<feature type="binding site" evidence="1">
    <location>
        <position position="79"/>
    </location>
    <ligand>
        <name>[4Fe-4S] cluster</name>
        <dbReference type="ChEBI" id="CHEBI:49883"/>
        <label>1</label>
    </ligand>
</feature>
<feature type="binding site" evidence="1">
    <location>
        <position position="94"/>
    </location>
    <ligand>
        <name>[4Fe-4S] cluster</name>
        <dbReference type="ChEBI" id="CHEBI:49883"/>
        <label>2</label>
        <note>4Fe-4S-S-AdoMet</note>
    </ligand>
</feature>
<feature type="binding site" evidence="1">
    <location>
        <position position="98"/>
    </location>
    <ligand>
        <name>[4Fe-4S] cluster</name>
        <dbReference type="ChEBI" id="CHEBI:49883"/>
        <label>2</label>
        <note>4Fe-4S-S-AdoMet</note>
    </ligand>
</feature>
<feature type="binding site" evidence="1">
    <location>
        <position position="101"/>
    </location>
    <ligand>
        <name>[4Fe-4S] cluster</name>
        <dbReference type="ChEBI" id="CHEBI:49883"/>
        <label>2</label>
        <note>4Fe-4S-S-AdoMet</note>
    </ligand>
</feature>
<feature type="binding site" evidence="1">
    <location>
        <position position="308"/>
    </location>
    <ligand>
        <name>[4Fe-4S] cluster</name>
        <dbReference type="ChEBI" id="CHEBI:49883"/>
        <label>1</label>
    </ligand>
</feature>
<name>LIPA_VIBA3</name>
<organism>
    <name type="scientific">Vibrio atlanticus (strain LGP32)</name>
    <name type="common">Vibrio splendidus (strain Mel32)</name>
    <dbReference type="NCBI Taxonomy" id="575788"/>
    <lineage>
        <taxon>Bacteria</taxon>
        <taxon>Pseudomonadati</taxon>
        <taxon>Pseudomonadota</taxon>
        <taxon>Gammaproteobacteria</taxon>
        <taxon>Vibrionales</taxon>
        <taxon>Vibrionaceae</taxon>
        <taxon>Vibrio</taxon>
    </lineage>
</organism>
<keyword id="KW-0004">4Fe-4S</keyword>
<keyword id="KW-0963">Cytoplasm</keyword>
<keyword id="KW-0408">Iron</keyword>
<keyword id="KW-0411">Iron-sulfur</keyword>
<keyword id="KW-0479">Metal-binding</keyword>
<keyword id="KW-0949">S-adenosyl-L-methionine</keyword>
<keyword id="KW-0808">Transferase</keyword>
<protein>
    <recommendedName>
        <fullName evidence="1">Lipoyl synthase</fullName>
        <ecNumber evidence="1">2.8.1.8</ecNumber>
    </recommendedName>
    <alternativeName>
        <fullName evidence="1">Lip-syn</fullName>
        <shortName evidence="1">LS</shortName>
    </alternativeName>
    <alternativeName>
        <fullName evidence="1">Lipoate synthase</fullName>
    </alternativeName>
    <alternativeName>
        <fullName evidence="1">Lipoic acid synthase</fullName>
    </alternativeName>
    <alternativeName>
        <fullName evidence="1">Sulfur insertion protein LipA</fullName>
    </alternativeName>
</protein>
<dbReference type="EC" id="2.8.1.8" evidence="1"/>
<dbReference type="EMBL" id="FM954972">
    <property type="protein sequence ID" value="CAV17702.1"/>
    <property type="molecule type" value="Genomic_DNA"/>
</dbReference>
<dbReference type="SMR" id="B7VKE6"/>
<dbReference type="STRING" id="575788.VS_0707"/>
<dbReference type="KEGG" id="vsp:VS_0707"/>
<dbReference type="PATRIC" id="fig|575788.5.peg.2055"/>
<dbReference type="eggNOG" id="COG0320">
    <property type="taxonomic scope" value="Bacteria"/>
</dbReference>
<dbReference type="HOGENOM" id="CLU_033144_2_1_6"/>
<dbReference type="UniPathway" id="UPA00538">
    <property type="reaction ID" value="UER00593"/>
</dbReference>
<dbReference type="Proteomes" id="UP000009100">
    <property type="component" value="Chromosome 1"/>
</dbReference>
<dbReference type="GO" id="GO:0005737">
    <property type="term" value="C:cytoplasm"/>
    <property type="evidence" value="ECO:0007669"/>
    <property type="project" value="UniProtKB-SubCell"/>
</dbReference>
<dbReference type="GO" id="GO:0051539">
    <property type="term" value="F:4 iron, 4 sulfur cluster binding"/>
    <property type="evidence" value="ECO:0007669"/>
    <property type="project" value="UniProtKB-UniRule"/>
</dbReference>
<dbReference type="GO" id="GO:0016992">
    <property type="term" value="F:lipoate synthase activity"/>
    <property type="evidence" value="ECO:0007669"/>
    <property type="project" value="UniProtKB-UniRule"/>
</dbReference>
<dbReference type="GO" id="GO:0046872">
    <property type="term" value="F:metal ion binding"/>
    <property type="evidence" value="ECO:0007669"/>
    <property type="project" value="UniProtKB-KW"/>
</dbReference>
<dbReference type="CDD" id="cd01335">
    <property type="entry name" value="Radical_SAM"/>
    <property type="match status" value="1"/>
</dbReference>
<dbReference type="FunFam" id="3.20.20.70:FF:000023">
    <property type="entry name" value="Lipoyl synthase"/>
    <property type="match status" value="1"/>
</dbReference>
<dbReference type="Gene3D" id="3.20.20.70">
    <property type="entry name" value="Aldolase class I"/>
    <property type="match status" value="1"/>
</dbReference>
<dbReference type="HAMAP" id="MF_00206">
    <property type="entry name" value="Lipoyl_synth"/>
    <property type="match status" value="1"/>
</dbReference>
<dbReference type="InterPro" id="IPR013785">
    <property type="entry name" value="Aldolase_TIM"/>
</dbReference>
<dbReference type="InterPro" id="IPR006638">
    <property type="entry name" value="Elp3/MiaA/NifB-like_rSAM"/>
</dbReference>
<dbReference type="InterPro" id="IPR031691">
    <property type="entry name" value="LIAS_N"/>
</dbReference>
<dbReference type="InterPro" id="IPR003698">
    <property type="entry name" value="Lipoyl_synth"/>
</dbReference>
<dbReference type="InterPro" id="IPR007197">
    <property type="entry name" value="rSAM"/>
</dbReference>
<dbReference type="NCBIfam" id="TIGR00510">
    <property type="entry name" value="lipA"/>
    <property type="match status" value="1"/>
</dbReference>
<dbReference type="NCBIfam" id="NF004019">
    <property type="entry name" value="PRK05481.1"/>
    <property type="match status" value="1"/>
</dbReference>
<dbReference type="NCBIfam" id="NF009544">
    <property type="entry name" value="PRK12928.1"/>
    <property type="match status" value="1"/>
</dbReference>
<dbReference type="PANTHER" id="PTHR10949">
    <property type="entry name" value="LIPOYL SYNTHASE"/>
    <property type="match status" value="1"/>
</dbReference>
<dbReference type="PANTHER" id="PTHR10949:SF0">
    <property type="entry name" value="LIPOYL SYNTHASE, MITOCHONDRIAL"/>
    <property type="match status" value="1"/>
</dbReference>
<dbReference type="Pfam" id="PF16881">
    <property type="entry name" value="LIAS_N"/>
    <property type="match status" value="1"/>
</dbReference>
<dbReference type="Pfam" id="PF04055">
    <property type="entry name" value="Radical_SAM"/>
    <property type="match status" value="1"/>
</dbReference>
<dbReference type="PIRSF" id="PIRSF005963">
    <property type="entry name" value="Lipoyl_synth"/>
    <property type="match status" value="1"/>
</dbReference>
<dbReference type="SFLD" id="SFLDF00271">
    <property type="entry name" value="lipoyl_synthase"/>
    <property type="match status" value="1"/>
</dbReference>
<dbReference type="SFLD" id="SFLDG01058">
    <property type="entry name" value="lipoyl_synthase_like"/>
    <property type="match status" value="1"/>
</dbReference>
<dbReference type="SMART" id="SM00729">
    <property type="entry name" value="Elp3"/>
    <property type="match status" value="1"/>
</dbReference>
<dbReference type="SUPFAM" id="SSF102114">
    <property type="entry name" value="Radical SAM enzymes"/>
    <property type="match status" value="1"/>
</dbReference>
<dbReference type="PROSITE" id="PS51918">
    <property type="entry name" value="RADICAL_SAM"/>
    <property type="match status" value="1"/>
</dbReference>
<evidence type="ECO:0000255" key="1">
    <source>
        <dbReference type="HAMAP-Rule" id="MF_00206"/>
    </source>
</evidence>
<evidence type="ECO:0000255" key="2">
    <source>
        <dbReference type="PROSITE-ProRule" id="PRU01266"/>
    </source>
</evidence>
<comment type="function">
    <text evidence="1">Catalyzes the radical-mediated insertion of two sulfur atoms into the C-6 and C-8 positions of the octanoyl moiety bound to the lipoyl domains of lipoate-dependent enzymes, thereby converting the octanoylated domains into lipoylated derivatives.</text>
</comment>
<comment type="catalytic activity">
    <reaction evidence="1">
        <text>[[Fe-S] cluster scaffold protein carrying a second [4Fe-4S](2+) cluster] + N(6)-octanoyl-L-lysyl-[protein] + 2 oxidized [2Fe-2S]-[ferredoxin] + 2 S-adenosyl-L-methionine + 4 H(+) = [[Fe-S] cluster scaffold protein] + N(6)-[(R)-dihydrolipoyl]-L-lysyl-[protein] + 4 Fe(3+) + 2 hydrogen sulfide + 2 5'-deoxyadenosine + 2 L-methionine + 2 reduced [2Fe-2S]-[ferredoxin]</text>
        <dbReference type="Rhea" id="RHEA:16585"/>
        <dbReference type="Rhea" id="RHEA-COMP:9928"/>
        <dbReference type="Rhea" id="RHEA-COMP:10000"/>
        <dbReference type="Rhea" id="RHEA-COMP:10001"/>
        <dbReference type="Rhea" id="RHEA-COMP:10475"/>
        <dbReference type="Rhea" id="RHEA-COMP:14568"/>
        <dbReference type="Rhea" id="RHEA-COMP:14569"/>
        <dbReference type="ChEBI" id="CHEBI:15378"/>
        <dbReference type="ChEBI" id="CHEBI:17319"/>
        <dbReference type="ChEBI" id="CHEBI:29034"/>
        <dbReference type="ChEBI" id="CHEBI:29919"/>
        <dbReference type="ChEBI" id="CHEBI:33722"/>
        <dbReference type="ChEBI" id="CHEBI:33737"/>
        <dbReference type="ChEBI" id="CHEBI:33738"/>
        <dbReference type="ChEBI" id="CHEBI:57844"/>
        <dbReference type="ChEBI" id="CHEBI:59789"/>
        <dbReference type="ChEBI" id="CHEBI:78809"/>
        <dbReference type="ChEBI" id="CHEBI:83100"/>
        <dbReference type="EC" id="2.8.1.8"/>
    </reaction>
</comment>
<comment type="cofactor">
    <cofactor evidence="1">
        <name>[4Fe-4S] cluster</name>
        <dbReference type="ChEBI" id="CHEBI:49883"/>
    </cofactor>
    <text evidence="1">Binds 2 [4Fe-4S] clusters per subunit. One cluster is coordinated with 3 cysteines and an exchangeable S-adenosyl-L-methionine.</text>
</comment>
<comment type="pathway">
    <text evidence="1">Protein modification; protein lipoylation via endogenous pathway; protein N(6)-(lipoyl)lysine from octanoyl-[acyl-carrier-protein]: step 2/2.</text>
</comment>
<comment type="subcellular location">
    <subcellularLocation>
        <location evidence="1">Cytoplasm</location>
    </subcellularLocation>
</comment>
<comment type="similarity">
    <text evidence="1">Belongs to the radical SAM superfamily. Lipoyl synthase family.</text>
</comment>
<gene>
    <name evidence="1" type="primary">lipA</name>
    <name type="ordered locus">VS_0707</name>
</gene>
<reference key="1">
    <citation type="submission" date="2009-02" db="EMBL/GenBank/DDBJ databases">
        <title>Vibrio splendidus str. LGP32 complete genome.</title>
        <authorList>
            <person name="Mazel D."/>
            <person name="Le Roux F."/>
        </authorList>
    </citation>
    <scope>NUCLEOTIDE SEQUENCE [LARGE SCALE GENOMIC DNA]</scope>
    <source>
        <strain>LGP32</strain>
    </source>
</reference>